<name>RL7_NEILA</name>
<feature type="chain" id="PRO_0000157555" description="Large ribosomal subunit protein bL12">
    <location>
        <begin position="1"/>
        <end position="122"/>
    </location>
</feature>
<sequence length="122" mass="12567">MAITKEDILEAVGSLTVMELNDLVKAFEEKFGVSAAAVAVASSAGPAAAAEEKTEFDVVLASAGDQKVGVIKVVRAITGLGLKEAKDIVDGAPKTIKEGVSKAEAEDIQKQLEEAGAKVEIK</sequence>
<proteinExistence type="inferred from homology"/>
<reference key="1">
    <citation type="submission" date="2000-10" db="EMBL/GenBank/DDBJ databases">
        <title>Alterations in protein profiles associated with induction of the contact-induced enhanced invasion phenotype of Neisseria gonorrhoeae.</title>
        <authorList>
            <person name="Spence J.M."/>
            <person name="Clark V.L."/>
        </authorList>
    </citation>
    <scope>NUCLEOTIDE SEQUENCE [GENOMIC DNA]</scope>
    <source>
        <strain>NRL 8828</strain>
    </source>
</reference>
<keyword id="KW-0687">Ribonucleoprotein</keyword>
<keyword id="KW-0689">Ribosomal protein</keyword>
<accession>P0A0W8</accession>
<accession>Q9ETV2</accession>
<comment type="function">
    <text evidence="1">Forms part of the ribosomal stalk which helps the ribosome interact with GTP-bound translation factors. Is thus essential for accurate translation.</text>
</comment>
<comment type="subunit">
    <text evidence="1">Homodimer. Part of the ribosomal stalk of the 50S ribosomal subunit. Forms a multimeric L10(L12)X complex, where L10 forms an elongated spine to which 2 to 4 L12 dimers bind in a sequential fashion. Binds GTP-bound translation factors.</text>
</comment>
<comment type="similarity">
    <text evidence="1">Belongs to the bacterial ribosomal protein bL12 family.</text>
</comment>
<organism>
    <name type="scientific">Neisseria lactamica</name>
    <dbReference type="NCBI Taxonomy" id="486"/>
    <lineage>
        <taxon>Bacteria</taxon>
        <taxon>Pseudomonadati</taxon>
        <taxon>Pseudomonadota</taxon>
        <taxon>Betaproteobacteria</taxon>
        <taxon>Neisseriales</taxon>
        <taxon>Neisseriaceae</taxon>
        <taxon>Neisseria</taxon>
    </lineage>
</organism>
<protein>
    <recommendedName>
        <fullName evidence="1">Large ribosomal subunit protein bL12</fullName>
    </recommendedName>
    <alternativeName>
        <fullName evidence="2">50S ribosomal protein L7/L12</fullName>
    </alternativeName>
</protein>
<gene>
    <name evidence="1" type="primary">rplL</name>
</gene>
<evidence type="ECO:0000255" key="1">
    <source>
        <dbReference type="HAMAP-Rule" id="MF_00368"/>
    </source>
</evidence>
<evidence type="ECO:0000305" key="2"/>
<dbReference type="EMBL" id="AF312972">
    <property type="protein sequence ID" value="AAG34164.1"/>
    <property type="molecule type" value="Genomic_DNA"/>
</dbReference>
<dbReference type="RefSeq" id="WP_003711144.1">
    <property type="nucleotide sequence ID" value="NZ_CAUJPL010000037.1"/>
</dbReference>
<dbReference type="SMR" id="P0A0W8"/>
<dbReference type="STRING" id="486.B2G52_02045"/>
<dbReference type="GO" id="GO:0022625">
    <property type="term" value="C:cytosolic large ribosomal subunit"/>
    <property type="evidence" value="ECO:0007669"/>
    <property type="project" value="TreeGrafter"/>
</dbReference>
<dbReference type="GO" id="GO:0003729">
    <property type="term" value="F:mRNA binding"/>
    <property type="evidence" value="ECO:0007669"/>
    <property type="project" value="TreeGrafter"/>
</dbReference>
<dbReference type="GO" id="GO:0003735">
    <property type="term" value="F:structural constituent of ribosome"/>
    <property type="evidence" value="ECO:0007669"/>
    <property type="project" value="InterPro"/>
</dbReference>
<dbReference type="GO" id="GO:0006412">
    <property type="term" value="P:translation"/>
    <property type="evidence" value="ECO:0007669"/>
    <property type="project" value="UniProtKB-UniRule"/>
</dbReference>
<dbReference type="CDD" id="cd00387">
    <property type="entry name" value="Ribosomal_L7_L12"/>
    <property type="match status" value="1"/>
</dbReference>
<dbReference type="FunFam" id="1.20.5.710:FF:000003">
    <property type="entry name" value="50S ribosomal protein L7/L12"/>
    <property type="match status" value="1"/>
</dbReference>
<dbReference type="FunFam" id="3.30.1390.10:FF:000001">
    <property type="entry name" value="50S ribosomal protein L7/L12"/>
    <property type="match status" value="1"/>
</dbReference>
<dbReference type="Gene3D" id="3.30.1390.10">
    <property type="match status" value="1"/>
</dbReference>
<dbReference type="Gene3D" id="1.20.5.710">
    <property type="entry name" value="Single helix bin"/>
    <property type="match status" value="1"/>
</dbReference>
<dbReference type="HAMAP" id="MF_00368">
    <property type="entry name" value="Ribosomal_bL12"/>
    <property type="match status" value="1"/>
</dbReference>
<dbReference type="InterPro" id="IPR000206">
    <property type="entry name" value="Ribosomal_bL12"/>
</dbReference>
<dbReference type="InterPro" id="IPR013823">
    <property type="entry name" value="Ribosomal_bL12_C"/>
</dbReference>
<dbReference type="InterPro" id="IPR014719">
    <property type="entry name" value="Ribosomal_bL12_C/ClpS-like"/>
</dbReference>
<dbReference type="InterPro" id="IPR008932">
    <property type="entry name" value="Ribosomal_bL12_oligo"/>
</dbReference>
<dbReference type="InterPro" id="IPR036235">
    <property type="entry name" value="Ribosomal_bL12_oligo_N_sf"/>
</dbReference>
<dbReference type="NCBIfam" id="TIGR00855">
    <property type="entry name" value="L12"/>
    <property type="match status" value="1"/>
</dbReference>
<dbReference type="PANTHER" id="PTHR45987">
    <property type="entry name" value="39S RIBOSOMAL PROTEIN L12"/>
    <property type="match status" value="1"/>
</dbReference>
<dbReference type="PANTHER" id="PTHR45987:SF4">
    <property type="entry name" value="LARGE RIBOSOMAL SUBUNIT PROTEIN BL12M"/>
    <property type="match status" value="1"/>
</dbReference>
<dbReference type="Pfam" id="PF00542">
    <property type="entry name" value="Ribosomal_L12"/>
    <property type="match status" value="1"/>
</dbReference>
<dbReference type="Pfam" id="PF16320">
    <property type="entry name" value="Ribosomal_L12_N"/>
    <property type="match status" value="1"/>
</dbReference>
<dbReference type="SUPFAM" id="SSF54736">
    <property type="entry name" value="ClpS-like"/>
    <property type="match status" value="1"/>
</dbReference>
<dbReference type="SUPFAM" id="SSF48300">
    <property type="entry name" value="Ribosomal protein L7/12, oligomerisation (N-terminal) domain"/>
    <property type="match status" value="1"/>
</dbReference>